<gene>
    <name type="primary">cdsA</name>
    <name type="ordered locus">RBE_0746</name>
</gene>
<dbReference type="EC" id="2.7.7.41"/>
<dbReference type="EMBL" id="CP000087">
    <property type="protein sequence ID" value="ABE04827.1"/>
    <property type="molecule type" value="Genomic_DNA"/>
</dbReference>
<dbReference type="RefSeq" id="WP_011477414.1">
    <property type="nucleotide sequence ID" value="NC_007940.1"/>
</dbReference>
<dbReference type="SMR" id="Q1RII7"/>
<dbReference type="KEGG" id="rbe:RBE_0746"/>
<dbReference type="eggNOG" id="COG0575">
    <property type="taxonomic scope" value="Bacteria"/>
</dbReference>
<dbReference type="HOGENOM" id="CLU_037294_1_1_5"/>
<dbReference type="OrthoDB" id="9799199at2"/>
<dbReference type="UniPathway" id="UPA00557">
    <property type="reaction ID" value="UER00614"/>
</dbReference>
<dbReference type="Proteomes" id="UP000001951">
    <property type="component" value="Chromosome"/>
</dbReference>
<dbReference type="GO" id="GO:0005886">
    <property type="term" value="C:plasma membrane"/>
    <property type="evidence" value="ECO:0007669"/>
    <property type="project" value="UniProtKB-SubCell"/>
</dbReference>
<dbReference type="GO" id="GO:0004605">
    <property type="term" value="F:phosphatidate cytidylyltransferase activity"/>
    <property type="evidence" value="ECO:0007669"/>
    <property type="project" value="UniProtKB-EC"/>
</dbReference>
<dbReference type="GO" id="GO:0016024">
    <property type="term" value="P:CDP-diacylglycerol biosynthetic process"/>
    <property type="evidence" value="ECO:0007669"/>
    <property type="project" value="UniProtKB-UniPathway"/>
</dbReference>
<dbReference type="InterPro" id="IPR000374">
    <property type="entry name" value="PC_trans"/>
</dbReference>
<dbReference type="PANTHER" id="PTHR46382">
    <property type="entry name" value="PHOSPHATIDATE CYTIDYLYLTRANSFERASE"/>
    <property type="match status" value="1"/>
</dbReference>
<dbReference type="PANTHER" id="PTHR46382:SF1">
    <property type="entry name" value="PHOSPHATIDATE CYTIDYLYLTRANSFERASE"/>
    <property type="match status" value="1"/>
</dbReference>
<dbReference type="Pfam" id="PF01148">
    <property type="entry name" value="CTP_transf_1"/>
    <property type="match status" value="1"/>
</dbReference>
<dbReference type="PROSITE" id="PS01315">
    <property type="entry name" value="CDS"/>
    <property type="match status" value="1"/>
</dbReference>
<sequence length="231" mass="25953">MIIQKGKEHLAKDKQKSNLYLRILSGIVLVPSFVVAILWLKPLFYVLMILVAIGMLSEWYDMTHSSIMYLLIGLIIIPIPISLLIFLSSNPINNWLIMLYFCIVWSVDIFAMIGGKTLGGAKLAPKISPKKTWSGLITGILSAGLVATLISFIPSFYIENYYFSNRIYLFIISCTLALTAQLSDLFISYFKRKFNIKDSGNIIPGHGGVLDRFDSIILTAPILFFINGLYL</sequence>
<comment type="catalytic activity">
    <reaction>
        <text>a 1,2-diacyl-sn-glycero-3-phosphate + CTP + H(+) = a CDP-1,2-diacyl-sn-glycerol + diphosphate</text>
        <dbReference type="Rhea" id="RHEA:16229"/>
        <dbReference type="ChEBI" id="CHEBI:15378"/>
        <dbReference type="ChEBI" id="CHEBI:33019"/>
        <dbReference type="ChEBI" id="CHEBI:37563"/>
        <dbReference type="ChEBI" id="CHEBI:58332"/>
        <dbReference type="ChEBI" id="CHEBI:58608"/>
        <dbReference type="EC" id="2.7.7.41"/>
    </reaction>
</comment>
<comment type="pathway">
    <text>Phospholipid metabolism; CDP-diacylglycerol biosynthesis; CDP-diacylglycerol from sn-glycerol 3-phosphate: step 3/3.</text>
</comment>
<comment type="subcellular location">
    <subcellularLocation>
        <location evidence="1">Cell membrane</location>
        <topology evidence="1">Multi-pass membrane protein</topology>
    </subcellularLocation>
</comment>
<comment type="similarity">
    <text evidence="3">Belongs to the CDS family.</text>
</comment>
<organism>
    <name type="scientific">Rickettsia bellii (strain RML369-C)</name>
    <dbReference type="NCBI Taxonomy" id="336407"/>
    <lineage>
        <taxon>Bacteria</taxon>
        <taxon>Pseudomonadati</taxon>
        <taxon>Pseudomonadota</taxon>
        <taxon>Alphaproteobacteria</taxon>
        <taxon>Rickettsiales</taxon>
        <taxon>Rickettsiaceae</taxon>
        <taxon>Rickettsieae</taxon>
        <taxon>Rickettsia</taxon>
        <taxon>belli group</taxon>
    </lineage>
</organism>
<name>CDSA_RICBR</name>
<accession>Q1RII7</accession>
<evidence type="ECO:0000250" key="1"/>
<evidence type="ECO:0000255" key="2"/>
<evidence type="ECO:0000305" key="3"/>
<reference key="1">
    <citation type="journal article" date="2006" name="PLoS Genet.">
        <title>Genome sequence of Rickettsia bellii illuminates the role of amoebae in gene exchanges between intracellular pathogens.</title>
        <authorList>
            <person name="Ogata H."/>
            <person name="La Scola B."/>
            <person name="Audic S."/>
            <person name="Renesto P."/>
            <person name="Blanc G."/>
            <person name="Robert C."/>
            <person name="Fournier P.-E."/>
            <person name="Claverie J.-M."/>
            <person name="Raoult D."/>
        </authorList>
    </citation>
    <scope>NUCLEOTIDE SEQUENCE [LARGE SCALE GENOMIC DNA]</scope>
    <source>
        <strain>RML369-C</strain>
    </source>
</reference>
<feature type="chain" id="PRO_0000281056" description="Phosphatidate cytidylyltransferase">
    <location>
        <begin position="1"/>
        <end position="231"/>
    </location>
</feature>
<feature type="transmembrane region" description="Helical" evidence="2">
    <location>
        <begin position="33"/>
        <end position="53"/>
    </location>
</feature>
<feature type="transmembrane region" description="Helical" evidence="2">
    <location>
        <begin position="67"/>
        <end position="87"/>
    </location>
</feature>
<feature type="transmembrane region" description="Helical" evidence="2">
    <location>
        <begin position="95"/>
        <end position="115"/>
    </location>
</feature>
<feature type="transmembrane region" description="Helical" evidence="2">
    <location>
        <begin position="133"/>
        <end position="153"/>
    </location>
</feature>
<feature type="transmembrane region" description="Helical" evidence="2">
    <location>
        <begin position="167"/>
        <end position="187"/>
    </location>
</feature>
<feature type="transmembrane region" description="Helical" evidence="2">
    <location>
        <begin position="206"/>
        <end position="226"/>
    </location>
</feature>
<proteinExistence type="inferred from homology"/>
<protein>
    <recommendedName>
        <fullName>Phosphatidate cytidylyltransferase</fullName>
        <ecNumber>2.7.7.41</ecNumber>
    </recommendedName>
    <alternativeName>
        <fullName>CDP-DAG synthase</fullName>
    </alternativeName>
    <alternativeName>
        <fullName>CDP-DG synthase</fullName>
    </alternativeName>
    <alternativeName>
        <fullName>CDP-diacylglycerol synthase</fullName>
        <shortName>CDS</shortName>
    </alternativeName>
    <alternativeName>
        <fullName>CDP-diglyceride pyrophosphorylase</fullName>
    </alternativeName>
    <alternativeName>
        <fullName>CDP-diglyceride synthase</fullName>
    </alternativeName>
    <alternativeName>
        <fullName>CTP:phosphatidate cytidylyltransferase</fullName>
    </alternativeName>
</protein>
<keyword id="KW-1003">Cell membrane</keyword>
<keyword id="KW-0444">Lipid biosynthesis</keyword>
<keyword id="KW-0443">Lipid metabolism</keyword>
<keyword id="KW-0472">Membrane</keyword>
<keyword id="KW-0548">Nucleotidyltransferase</keyword>
<keyword id="KW-0594">Phospholipid biosynthesis</keyword>
<keyword id="KW-1208">Phospholipid metabolism</keyword>
<keyword id="KW-0808">Transferase</keyword>
<keyword id="KW-0812">Transmembrane</keyword>
<keyword id="KW-1133">Transmembrane helix</keyword>